<sequence length="707" mass="81734">MVLKSTSANDVSVYQVSGTNVSRSLPDWIAKKRKRQLKNDLEYQNRVELIQDFEFSEASNKIKVSRDGQYCMATGTYKPQIHVYDFANLSLKFDRHTDAENVDFTILSDDWTKSVHLQNDRSIQFQNKGGLHYTTRIPKFGRSLVYNKVNCDLYVGASGNELYRLNLEKGRFLNPFKLDTEGVNHVSINEVNGLLAAGTETNVVEFWDPRSRSRVSKLYLENNIDNRPFQVTTTSFRNDGLTFACGTSNGYSYIYDLRTSEPSIIKDQGYGFDIKKIIWLDNVGTENKIVTCDKRIAKIWDRLDGKAYASMEPSVDINDIEHVPGTGMFFTANESIPMHTYYIPSLGPSPRWCSFLDSITEELEEKPSDTVYSNYRFITRDDVKKLNLTHLVGSRVLRAYMHGFFINTELYDKVSLIANPDAYKDEREREIRRRIEKERESRIRSSGAVQKPKIKVNKTLVDKLSQKRGDKVAGKVLTDDRFKEMFEDEEFQVDEDDYDFKQLNPVKSIKETEEGAAKRIRALTAAEESDEERIAMKDGRGHYDYEDEESDEEESDDETNQKSNKEELSEKDLRKMEKQKALIERRKKEKEQSERFMNEMKAGTSTSTQRDESAHVTFGEQVGELLEVENGKKSNESILRRNQRGEAELTFIPQRKSKKDGNYKSRRHDNSSDEEGIDENGNKKDNGRSKPRFENRRRASKNAFRGM</sequence>
<keyword id="KW-0002">3D-structure</keyword>
<keyword id="KW-0539">Nucleus</keyword>
<keyword id="KW-0597">Phosphoprotein</keyword>
<keyword id="KW-1185">Reference proteome</keyword>
<keyword id="KW-0677">Repeat</keyword>
<keyword id="KW-0690">Ribosome biogenesis</keyword>
<keyword id="KW-0698">rRNA processing</keyword>
<keyword id="KW-0853">WD repeat</keyword>
<organism>
    <name type="scientific">Saccharomyces cerevisiae (strain ATCC 204508 / S288c)</name>
    <name type="common">Baker's yeast</name>
    <dbReference type="NCBI Taxonomy" id="559292"/>
    <lineage>
        <taxon>Eukaryota</taxon>
        <taxon>Fungi</taxon>
        <taxon>Dikarya</taxon>
        <taxon>Ascomycota</taxon>
        <taxon>Saccharomycotina</taxon>
        <taxon>Saccharomycetes</taxon>
        <taxon>Saccharomycetales</taxon>
        <taxon>Saccharomycetaceae</taxon>
        <taxon>Saccharomyces</taxon>
    </lineage>
</organism>
<feature type="chain" id="PRO_0000051473" description="Ribosome biogenesis protein ENP2">
    <location>
        <begin position="1"/>
        <end position="707"/>
    </location>
</feature>
<feature type="repeat" description="WD 1">
    <location>
        <begin position="54"/>
        <end position="94"/>
    </location>
</feature>
<feature type="repeat" description="WD 2">
    <location>
        <begin position="178"/>
        <end position="217"/>
    </location>
</feature>
<feature type="repeat" description="WD 3">
    <location>
        <begin position="226"/>
        <end position="265"/>
    </location>
</feature>
<feature type="repeat" description="WD 4">
    <location>
        <begin position="269"/>
        <end position="310"/>
    </location>
</feature>
<feature type="repeat" description="WD 5">
    <location>
        <begin position="312"/>
        <end position="351"/>
    </location>
</feature>
<feature type="region of interest" description="Disordered" evidence="1">
    <location>
        <begin position="523"/>
        <end position="707"/>
    </location>
</feature>
<feature type="compositionally biased region" description="Basic and acidic residues" evidence="1">
    <location>
        <begin position="532"/>
        <end position="544"/>
    </location>
</feature>
<feature type="compositionally biased region" description="Acidic residues" evidence="1">
    <location>
        <begin position="545"/>
        <end position="558"/>
    </location>
</feature>
<feature type="compositionally biased region" description="Basic and acidic residues" evidence="1">
    <location>
        <begin position="559"/>
        <end position="598"/>
    </location>
</feature>
<feature type="compositionally biased region" description="Basic and acidic residues" evidence="1">
    <location>
        <begin position="629"/>
        <end position="647"/>
    </location>
</feature>
<feature type="compositionally biased region" description="Basic and acidic residues" evidence="1">
    <location>
        <begin position="659"/>
        <end position="671"/>
    </location>
</feature>
<feature type="compositionally biased region" description="Basic and acidic residues" evidence="1">
    <location>
        <begin position="680"/>
        <end position="697"/>
    </location>
</feature>
<feature type="modified residue" description="Phosphoserine" evidence="7 8 9 10">
    <location>
        <position position="529"/>
    </location>
</feature>
<feature type="modified residue" description="Phosphoserine" evidence="8 9 10">
    <location>
        <position position="550"/>
    </location>
</feature>
<feature type="modified residue" description="Phosphoserine" evidence="8 9 10">
    <location>
        <position position="555"/>
    </location>
</feature>
<feature type="sequence conflict" description="In Ref. 1; CAA59803 and 2; CAA97158." evidence="6" ref="1 2">
    <original>D</original>
    <variation>E</variation>
    <location>
        <position position="678"/>
    </location>
</feature>
<dbReference type="EMBL" id="X85807">
    <property type="protein sequence ID" value="CAA59803.1"/>
    <property type="molecule type" value="Genomic_DNA"/>
</dbReference>
<dbReference type="EMBL" id="Z72930">
    <property type="protein sequence ID" value="CAA97158.1"/>
    <property type="molecule type" value="Genomic_DNA"/>
</dbReference>
<dbReference type="EMBL" id="BK006941">
    <property type="protein sequence ID" value="DAA08236.2"/>
    <property type="molecule type" value="Genomic_DNA"/>
</dbReference>
<dbReference type="PIR" id="S60436">
    <property type="entry name" value="S60436"/>
</dbReference>
<dbReference type="RefSeq" id="NP_011661.2">
    <property type="nucleotide sequence ID" value="NM_001181274.2"/>
</dbReference>
<dbReference type="PDB" id="5WLC">
    <property type="method" value="EM"/>
    <property type="resolution" value="3.80 A"/>
    <property type="chains" value="LV=1-707"/>
</dbReference>
<dbReference type="PDB" id="6KE6">
    <property type="method" value="EM"/>
    <property type="resolution" value="3.40 A"/>
    <property type="chains" value="RA=1-707"/>
</dbReference>
<dbReference type="PDB" id="6LQP">
    <property type="method" value="EM"/>
    <property type="resolution" value="3.20 A"/>
    <property type="chains" value="RA=1-707"/>
</dbReference>
<dbReference type="PDB" id="6LQQ">
    <property type="method" value="EM"/>
    <property type="resolution" value="4.10 A"/>
    <property type="chains" value="RA=1-707"/>
</dbReference>
<dbReference type="PDB" id="6LQR">
    <property type="method" value="EM"/>
    <property type="resolution" value="8.60 A"/>
    <property type="chains" value="RA=1-707"/>
</dbReference>
<dbReference type="PDB" id="6LQU">
    <property type="method" value="EM"/>
    <property type="resolution" value="3.70 A"/>
    <property type="chains" value="RA=1-707"/>
</dbReference>
<dbReference type="PDB" id="6LQV">
    <property type="method" value="EM"/>
    <property type="resolution" value="4.80 A"/>
    <property type="chains" value="RA=1-707"/>
</dbReference>
<dbReference type="PDB" id="6ZQB">
    <property type="method" value="EM"/>
    <property type="resolution" value="3.90 A"/>
    <property type="chains" value="JC=1-707"/>
</dbReference>
<dbReference type="PDB" id="6ZQC">
    <property type="method" value="EM"/>
    <property type="resolution" value="3.80 A"/>
    <property type="chains" value="JC=1-707"/>
</dbReference>
<dbReference type="PDB" id="7AJT">
    <property type="method" value="EM"/>
    <property type="resolution" value="4.60 A"/>
    <property type="chains" value="JC=1-707"/>
</dbReference>
<dbReference type="PDB" id="7D63">
    <property type="method" value="EM"/>
    <property type="resolution" value="12.30 A"/>
    <property type="chains" value="RA=1-707"/>
</dbReference>
<dbReference type="PDB" id="7SUK">
    <property type="method" value="EM"/>
    <property type="resolution" value="3.99 A"/>
    <property type="chains" value="LV=2-363"/>
</dbReference>
<dbReference type="PDBsum" id="5WLC"/>
<dbReference type="PDBsum" id="6KE6"/>
<dbReference type="PDBsum" id="6LQP"/>
<dbReference type="PDBsum" id="6LQQ"/>
<dbReference type="PDBsum" id="6LQR"/>
<dbReference type="PDBsum" id="6LQU"/>
<dbReference type="PDBsum" id="6LQV"/>
<dbReference type="PDBsum" id="6ZQB"/>
<dbReference type="PDBsum" id="6ZQC"/>
<dbReference type="PDBsum" id="7AJT"/>
<dbReference type="PDBsum" id="7D63"/>
<dbReference type="PDBsum" id="7SUK"/>
<dbReference type="EMDB" id="EMD-0949"/>
<dbReference type="EMDB" id="EMD-0950"/>
<dbReference type="EMDB" id="EMD-0951"/>
<dbReference type="EMDB" id="EMD-0954"/>
<dbReference type="EMDB" id="EMD-0955"/>
<dbReference type="EMDB" id="EMD-11358"/>
<dbReference type="EMDB" id="EMD-11359"/>
<dbReference type="EMDB" id="EMD-11807"/>
<dbReference type="EMDB" id="EMD-25441"/>
<dbReference type="EMDB" id="EMD-30588"/>
<dbReference type="EMDB" id="EMD-8859"/>
<dbReference type="EMDB" id="EMD-9964"/>
<dbReference type="SMR" id="P48234"/>
<dbReference type="BioGRID" id="33393">
    <property type="interactions" value="181"/>
</dbReference>
<dbReference type="ComplexPortal" id="CPX-1604">
    <property type="entry name" value="Small ribosomal subunit processome"/>
</dbReference>
<dbReference type="DIP" id="DIP-5535N"/>
<dbReference type="FunCoup" id="P48234">
    <property type="interactions" value="1503"/>
</dbReference>
<dbReference type="IntAct" id="P48234">
    <property type="interactions" value="78"/>
</dbReference>
<dbReference type="MINT" id="P48234"/>
<dbReference type="STRING" id="4932.YGR145W"/>
<dbReference type="iPTMnet" id="P48234"/>
<dbReference type="PaxDb" id="4932-YGR145W"/>
<dbReference type="PeptideAtlas" id="P48234"/>
<dbReference type="EnsemblFungi" id="YGR145W_mRNA">
    <property type="protein sequence ID" value="YGR145W"/>
    <property type="gene ID" value="YGR145W"/>
</dbReference>
<dbReference type="GeneID" id="853048"/>
<dbReference type="KEGG" id="sce:YGR145W"/>
<dbReference type="AGR" id="SGD:S000003377"/>
<dbReference type="SGD" id="S000003377">
    <property type="gene designation" value="ENP2"/>
</dbReference>
<dbReference type="VEuPathDB" id="FungiDB:YGR145W"/>
<dbReference type="eggNOG" id="KOG2321">
    <property type="taxonomic scope" value="Eukaryota"/>
</dbReference>
<dbReference type="GeneTree" id="ENSGT00390000007900"/>
<dbReference type="HOGENOM" id="CLU_009923_0_0_1"/>
<dbReference type="InParanoid" id="P48234"/>
<dbReference type="OMA" id="GYFMDVR"/>
<dbReference type="OrthoDB" id="273340at2759"/>
<dbReference type="BioCyc" id="YEAST:G3O-30849-MONOMER"/>
<dbReference type="BioGRID-ORCS" id="853048">
    <property type="hits" value="0 hits in 10 CRISPR screens"/>
</dbReference>
<dbReference type="PRO" id="PR:P48234"/>
<dbReference type="Proteomes" id="UP000002311">
    <property type="component" value="Chromosome VII"/>
</dbReference>
<dbReference type="RNAct" id="P48234">
    <property type="molecule type" value="protein"/>
</dbReference>
<dbReference type="GO" id="GO:0030686">
    <property type="term" value="C:90S preribosome"/>
    <property type="evidence" value="ECO:0007005"/>
    <property type="project" value="SGD"/>
</dbReference>
<dbReference type="GO" id="GO:0005730">
    <property type="term" value="C:nucleolus"/>
    <property type="evidence" value="ECO:0000314"/>
    <property type="project" value="SGD"/>
</dbReference>
<dbReference type="GO" id="GO:0032040">
    <property type="term" value="C:small-subunit processome"/>
    <property type="evidence" value="ECO:0000315"/>
    <property type="project" value="SGD"/>
</dbReference>
<dbReference type="GO" id="GO:0000462">
    <property type="term" value="P:maturation of SSU-rRNA from tricistronic rRNA transcript (SSU-rRNA, 5.8S rRNA, LSU-rRNA)"/>
    <property type="evidence" value="ECO:0000315"/>
    <property type="project" value="SGD"/>
</dbReference>
<dbReference type="GO" id="GO:0042274">
    <property type="term" value="P:ribosomal small subunit biogenesis"/>
    <property type="evidence" value="ECO:0000315"/>
    <property type="project" value="SGD"/>
</dbReference>
<dbReference type="FunFam" id="2.130.10.10:FF:000537">
    <property type="entry name" value="Ribosome biogenesis protein ENP2"/>
    <property type="match status" value="1"/>
</dbReference>
<dbReference type="Gene3D" id="2.130.10.10">
    <property type="entry name" value="YVTN repeat-like/Quinoprotein amine dehydrogenase"/>
    <property type="match status" value="1"/>
</dbReference>
<dbReference type="InterPro" id="IPR056551">
    <property type="entry name" value="Beta-prop_NOL10_N"/>
</dbReference>
<dbReference type="InterPro" id="IPR040382">
    <property type="entry name" value="NOL10/Enp2"/>
</dbReference>
<dbReference type="InterPro" id="IPR056550">
    <property type="entry name" value="NOL10_2nd"/>
</dbReference>
<dbReference type="InterPro" id="IPR012580">
    <property type="entry name" value="NUC153"/>
</dbReference>
<dbReference type="InterPro" id="IPR015943">
    <property type="entry name" value="WD40/YVTN_repeat-like_dom_sf"/>
</dbReference>
<dbReference type="InterPro" id="IPR036322">
    <property type="entry name" value="WD40_repeat_dom_sf"/>
</dbReference>
<dbReference type="InterPro" id="IPR001680">
    <property type="entry name" value="WD40_rpt"/>
</dbReference>
<dbReference type="PANTHER" id="PTHR14927">
    <property type="entry name" value="NUCLEOLAR PROTEIN 10"/>
    <property type="match status" value="1"/>
</dbReference>
<dbReference type="PANTHER" id="PTHR14927:SF0">
    <property type="entry name" value="NUCLEOLAR PROTEIN 10"/>
    <property type="match status" value="1"/>
</dbReference>
<dbReference type="Pfam" id="PF23098">
    <property type="entry name" value="Beta-prop_NOL10_N"/>
    <property type="match status" value="1"/>
</dbReference>
<dbReference type="Pfam" id="PF23097">
    <property type="entry name" value="NOL10_2nd"/>
    <property type="match status" value="1"/>
</dbReference>
<dbReference type="Pfam" id="PF08159">
    <property type="entry name" value="NUC153"/>
    <property type="match status" value="1"/>
</dbReference>
<dbReference type="SMART" id="SM00320">
    <property type="entry name" value="WD40"/>
    <property type="match status" value="3"/>
</dbReference>
<dbReference type="SUPFAM" id="SSF50978">
    <property type="entry name" value="WD40 repeat-like"/>
    <property type="match status" value="1"/>
</dbReference>
<dbReference type="PROSITE" id="PS50294">
    <property type="entry name" value="WD_REPEATS_REGION"/>
    <property type="match status" value="1"/>
</dbReference>
<reference key="1">
    <citation type="journal article" date="1995" name="Yeast">
        <title>The sequence of a 27 kb segment on the right arm of chromosome VII from Saccharomyces cerevisiae reveals MOL1, NAT2, RPL30B, RSR1, CYS4, PEM1/CHO2, NSR1 genes and ten new open reading frames.</title>
        <authorList>
            <person name="Skala J."/>
            <person name="Nawrocki A."/>
            <person name="Goffeau A."/>
        </authorList>
    </citation>
    <scope>NUCLEOTIDE SEQUENCE [GENOMIC DNA]</scope>
    <source>
        <strain>ATCC 204508 / S288c</strain>
    </source>
</reference>
<reference key="2">
    <citation type="journal article" date="1997" name="Nature">
        <title>The nucleotide sequence of Saccharomyces cerevisiae chromosome VII.</title>
        <authorList>
            <person name="Tettelin H."/>
            <person name="Agostoni-Carbone M.L."/>
            <person name="Albermann K."/>
            <person name="Albers M."/>
            <person name="Arroyo J."/>
            <person name="Backes U."/>
            <person name="Barreiros T."/>
            <person name="Bertani I."/>
            <person name="Bjourson A.J."/>
            <person name="Brueckner M."/>
            <person name="Bruschi C.V."/>
            <person name="Carignani G."/>
            <person name="Castagnoli L."/>
            <person name="Cerdan E."/>
            <person name="Clemente M.L."/>
            <person name="Coblenz A."/>
            <person name="Coglievina M."/>
            <person name="Coissac E."/>
            <person name="Defoor E."/>
            <person name="Del Bino S."/>
            <person name="Delius H."/>
            <person name="Delneri D."/>
            <person name="de Wergifosse P."/>
            <person name="Dujon B."/>
            <person name="Durand P."/>
            <person name="Entian K.-D."/>
            <person name="Eraso P."/>
            <person name="Escribano V."/>
            <person name="Fabiani L."/>
            <person name="Fartmann B."/>
            <person name="Feroli F."/>
            <person name="Feuermann M."/>
            <person name="Frontali L."/>
            <person name="Garcia-Gonzalez M."/>
            <person name="Garcia-Saez M.I."/>
            <person name="Goffeau A."/>
            <person name="Guerreiro P."/>
            <person name="Hani J."/>
            <person name="Hansen M."/>
            <person name="Hebling U."/>
            <person name="Hernandez K."/>
            <person name="Heumann K."/>
            <person name="Hilger F."/>
            <person name="Hofmann B."/>
            <person name="Indge K.J."/>
            <person name="James C.M."/>
            <person name="Klima R."/>
            <person name="Koetter P."/>
            <person name="Kramer B."/>
            <person name="Kramer W."/>
            <person name="Lauquin G."/>
            <person name="Leuther H."/>
            <person name="Louis E.J."/>
            <person name="Maillier E."/>
            <person name="Marconi A."/>
            <person name="Martegani E."/>
            <person name="Mazon M.J."/>
            <person name="Mazzoni C."/>
            <person name="McReynolds A.D.K."/>
            <person name="Melchioretto P."/>
            <person name="Mewes H.-W."/>
            <person name="Minenkova O."/>
            <person name="Mueller-Auer S."/>
            <person name="Nawrocki A."/>
            <person name="Netter P."/>
            <person name="Neu R."/>
            <person name="Nombela C."/>
            <person name="Oliver S.G."/>
            <person name="Panzeri L."/>
            <person name="Paoluzi S."/>
            <person name="Plevani P."/>
            <person name="Portetelle D."/>
            <person name="Portillo F."/>
            <person name="Potier S."/>
            <person name="Purnelle B."/>
            <person name="Rieger M."/>
            <person name="Riles L."/>
            <person name="Rinaldi T."/>
            <person name="Robben J."/>
            <person name="Rodrigues-Pousada C."/>
            <person name="Rodriguez-Belmonte E."/>
            <person name="Rodriguez-Torres A.M."/>
            <person name="Rose M."/>
            <person name="Ruzzi M."/>
            <person name="Saliola M."/>
            <person name="Sanchez-Perez M."/>
            <person name="Schaefer B."/>
            <person name="Schaefer M."/>
            <person name="Scharfe M."/>
            <person name="Schmidheini T."/>
            <person name="Schreer A."/>
            <person name="Skala J."/>
            <person name="Souciet J.-L."/>
            <person name="Steensma H.Y."/>
            <person name="Talla E."/>
            <person name="Thierry A."/>
            <person name="Vandenbol M."/>
            <person name="van der Aart Q.J.M."/>
            <person name="Van Dyck L."/>
            <person name="Vanoni M."/>
            <person name="Verhasselt P."/>
            <person name="Voet M."/>
            <person name="Volckaert G."/>
            <person name="Wambutt R."/>
            <person name="Watson M.D."/>
            <person name="Weber N."/>
            <person name="Wedler E."/>
            <person name="Wedler H."/>
            <person name="Wipfli P."/>
            <person name="Wolf K."/>
            <person name="Wright L.F."/>
            <person name="Zaccaria P."/>
            <person name="Zimmermann M."/>
            <person name="Zollner A."/>
            <person name="Kleine K."/>
        </authorList>
    </citation>
    <scope>NUCLEOTIDE SEQUENCE [LARGE SCALE GENOMIC DNA]</scope>
    <source>
        <strain>ATCC 204508 / S288c</strain>
    </source>
</reference>
<reference key="3">
    <citation type="journal article" date="2014" name="G3 (Bethesda)">
        <title>The reference genome sequence of Saccharomyces cerevisiae: Then and now.</title>
        <authorList>
            <person name="Engel S.R."/>
            <person name="Dietrich F.S."/>
            <person name="Fisk D.G."/>
            <person name="Binkley G."/>
            <person name="Balakrishnan R."/>
            <person name="Costanzo M.C."/>
            <person name="Dwight S.S."/>
            <person name="Hitz B.C."/>
            <person name="Karra K."/>
            <person name="Nash R.S."/>
            <person name="Weng S."/>
            <person name="Wong E.D."/>
            <person name="Lloyd P."/>
            <person name="Skrzypek M.S."/>
            <person name="Miyasato S.R."/>
            <person name="Simison M."/>
            <person name="Cherry J.M."/>
        </authorList>
    </citation>
    <scope>GENOME REANNOTATION</scope>
    <scope>SEQUENCE REVISION TO 678</scope>
    <source>
        <strain>ATCC 204508 / S288c</strain>
    </source>
</reference>
<reference key="4">
    <citation type="journal article" date="2002" name="Mol. Cell">
        <title>90S pre-ribosomes include the 35S pre-rRNA, the U3 snoRNP, and 40S subunit processing factors but predominantly lack 60S synthesis factors.</title>
        <authorList>
            <person name="Grandi P."/>
            <person name="Rybin V."/>
            <person name="Bassler J."/>
            <person name="Petfalski E."/>
            <person name="Strauss D."/>
            <person name="Marzioch M."/>
            <person name="Schaefer T."/>
            <person name="Kuster B."/>
            <person name="Tschochner H."/>
            <person name="Tollervey D."/>
            <person name="Gavin A.-C."/>
            <person name="Hurt E."/>
        </authorList>
    </citation>
    <scope>IDENTIFICATION IN THE 90S PRE-RIBOSOME</scope>
    <scope>IDENTIFICATION BY MASS SPECTROMETRY</scope>
</reference>
<reference key="5">
    <citation type="journal article" date="2003" name="Mol. Cell">
        <title>Assigning function to yeast proteins by integration of technologies.</title>
        <authorList>
            <person name="Hazbun T.R."/>
            <person name="Malmstroem L."/>
            <person name="Anderson S."/>
            <person name="Graczyk B.J."/>
            <person name="Fox B."/>
            <person name="Riffle M."/>
            <person name="Sundin B.A."/>
            <person name="Aranda J.D."/>
            <person name="McDonald W.H."/>
            <person name="Chiu C.-H."/>
            <person name="Snydsman B.E."/>
            <person name="Bradley P."/>
            <person name="Muller E.G.D."/>
            <person name="Fields S."/>
            <person name="Baker D."/>
            <person name="Yates J.R. III"/>
            <person name="Davis T.N."/>
        </authorList>
    </citation>
    <scope>IDENTIFICATION BY MASS SPECTROMETRY</scope>
    <scope>SUBCELLULAR LOCATION [LARGE SCALE ANALYSIS]</scope>
</reference>
<reference key="6">
    <citation type="journal article" date="2004" name="Eukaryot. Cell">
        <title>The small-subunit processome is a ribosome assembly intermediate.</title>
        <authorList>
            <person name="Bernstein K.A."/>
            <person name="Gallagher J.E.G."/>
            <person name="Mitchell B.M."/>
            <person name="Granneman S."/>
            <person name="Baserga S.J."/>
        </authorList>
    </citation>
    <scope>SUBCELLULAR LOCATION</scope>
</reference>
<reference key="7">
    <citation type="journal article" date="2006" name="Nature">
        <title>Proteome survey reveals modularity of the yeast cell machinery.</title>
        <authorList>
            <person name="Gavin A.-C."/>
            <person name="Aloy P."/>
            <person name="Grandi P."/>
            <person name="Krause R."/>
            <person name="Boesche M."/>
            <person name="Marzioch M."/>
            <person name="Rau C."/>
            <person name="Jensen L.J."/>
            <person name="Bastuck S."/>
            <person name="Duempelfeld B."/>
            <person name="Edelmann A."/>
            <person name="Heurtier M.-A."/>
            <person name="Hoffman V."/>
            <person name="Hoefert C."/>
            <person name="Klein K."/>
            <person name="Hudak M."/>
            <person name="Michon A.-M."/>
            <person name="Schelder M."/>
            <person name="Schirle M."/>
            <person name="Remor M."/>
            <person name="Rudi T."/>
            <person name="Hooper S."/>
            <person name="Bauer A."/>
            <person name="Bouwmeester T."/>
            <person name="Casari G."/>
            <person name="Drewes G."/>
            <person name="Neubauer G."/>
            <person name="Rick J.M."/>
            <person name="Kuster B."/>
            <person name="Bork P."/>
            <person name="Russell R.B."/>
            <person name="Superti-Furga G."/>
        </authorList>
    </citation>
    <scope>ASSOCIATION WITH THE 90S PRE-RIBOSOME</scope>
    <scope>IDENTIFICATION BY MASS SPECTROMETRY</scope>
</reference>
<reference key="8">
    <citation type="journal article" date="2006" name="Yeast">
        <title>The budding yeast rRNA and ribosome biosynthesis (RRB) regulon contains over 200 genes.</title>
        <authorList>
            <person name="Wade C.H."/>
            <person name="Umbarger M.A."/>
            <person name="McAlear M.A."/>
        </authorList>
    </citation>
    <scope>FUNCTION</scope>
</reference>
<reference key="9">
    <citation type="journal article" date="2007" name="J. Proteome Res.">
        <title>Large-scale phosphorylation analysis of alpha-factor-arrested Saccharomyces cerevisiae.</title>
        <authorList>
            <person name="Li X."/>
            <person name="Gerber S.A."/>
            <person name="Rudner A.D."/>
            <person name="Beausoleil S.A."/>
            <person name="Haas W."/>
            <person name="Villen J."/>
            <person name="Elias J.E."/>
            <person name="Gygi S.P."/>
        </authorList>
    </citation>
    <scope>PHOSPHORYLATION [LARGE SCALE ANALYSIS] AT SER-529; SER-550 AND SER-555</scope>
    <scope>IDENTIFICATION BY MASS SPECTROMETRY [LARGE SCALE ANALYSIS]</scope>
    <source>
        <strain>ADR376</strain>
    </source>
</reference>
<reference key="10">
    <citation type="journal article" date="2007" name="Proc. Natl. Acad. Sci. U.S.A.">
        <title>Analysis of phosphorylation sites on proteins from Saccharomyces cerevisiae by electron transfer dissociation (ETD) mass spectrometry.</title>
        <authorList>
            <person name="Chi A."/>
            <person name="Huttenhower C."/>
            <person name="Geer L.Y."/>
            <person name="Coon J.J."/>
            <person name="Syka J.E.P."/>
            <person name="Bai D.L."/>
            <person name="Shabanowitz J."/>
            <person name="Burke D.J."/>
            <person name="Troyanskaya O.G."/>
            <person name="Hunt D.F."/>
        </authorList>
    </citation>
    <scope>PHOSPHORYLATION [LARGE SCALE ANALYSIS] AT SER-529</scope>
    <scope>IDENTIFICATION BY MASS SPECTROMETRY [LARGE SCALE ANALYSIS]</scope>
</reference>
<reference key="11">
    <citation type="journal article" date="2008" name="Mol. Cell. Proteomics">
        <title>A multidimensional chromatography technology for in-depth phosphoproteome analysis.</title>
        <authorList>
            <person name="Albuquerque C.P."/>
            <person name="Smolka M.B."/>
            <person name="Payne S.H."/>
            <person name="Bafna V."/>
            <person name="Eng J."/>
            <person name="Zhou H."/>
        </authorList>
    </citation>
    <scope>PHOSPHORYLATION [LARGE SCALE ANALYSIS] AT SER-529; SER-550 AND SER-555</scope>
    <scope>IDENTIFICATION BY MASS SPECTROMETRY [LARGE SCALE ANALYSIS]</scope>
</reference>
<reference key="12">
    <citation type="journal article" date="2009" name="Science">
        <title>Global analysis of Cdk1 substrate phosphorylation sites provides insights into evolution.</title>
        <authorList>
            <person name="Holt L.J."/>
            <person name="Tuch B.B."/>
            <person name="Villen J."/>
            <person name="Johnson A.D."/>
            <person name="Gygi S.P."/>
            <person name="Morgan D.O."/>
        </authorList>
    </citation>
    <scope>PHOSPHORYLATION [LARGE SCALE ANALYSIS] AT SER-529; SER-550 AND SER-555</scope>
    <scope>IDENTIFICATION BY MASS SPECTROMETRY [LARGE SCALE ANALYSIS]</scope>
</reference>
<name>NOL10_YEAST</name>
<proteinExistence type="evidence at protein level"/>
<protein>
    <recommendedName>
        <fullName>Ribosome biogenesis protein ENP2</fullName>
    </recommendedName>
    <alternativeName>
        <fullName>Essential nuclear protein 2</fullName>
    </alternativeName>
</protein>
<gene>
    <name type="primary">ENP2</name>
    <name type="ordered locus">YGR145W</name>
    <name type="ORF">G6623</name>
</gene>
<evidence type="ECO:0000256" key="1">
    <source>
        <dbReference type="SAM" id="MobiDB-lite"/>
    </source>
</evidence>
<evidence type="ECO:0000269" key="2">
    <source>
    </source>
</evidence>
<evidence type="ECO:0000269" key="3">
    <source>
    </source>
</evidence>
<evidence type="ECO:0000269" key="4">
    <source>
    </source>
</evidence>
<evidence type="ECO:0000269" key="5">
    <source>
    </source>
</evidence>
<evidence type="ECO:0000305" key="6"/>
<evidence type="ECO:0007744" key="7">
    <source>
    </source>
</evidence>
<evidence type="ECO:0007744" key="8">
    <source>
    </source>
</evidence>
<evidence type="ECO:0007744" key="9">
    <source>
    </source>
</evidence>
<evidence type="ECO:0007744" key="10">
    <source>
    </source>
</evidence>
<accession>P48234</accession>
<accession>D6VUS5</accession>
<comment type="function">
    <text evidence="5">May be involved in rRNA-processing and ribosome biosynthesis.</text>
</comment>
<comment type="subunit">
    <text evidence="2">Component of the 90S pre-ribosomes.</text>
</comment>
<comment type="interaction">
    <interactant intactId="EBI-23354">
        <id>P48234</id>
    </interactant>
    <interactant intactId="EBI-36432">
        <id>Q06631</id>
        <label>BFR2</label>
    </interactant>
    <organismsDiffer>false</organismsDiffer>
    <experiments>14</experiments>
</comment>
<comment type="interaction">
    <interactant intactId="EBI-23354">
        <id>P48234</id>
    </interactant>
    <interactant intactId="EBI-5612">
        <id>P20448</id>
        <label>HCA4</label>
    </interactant>
    <organismsDiffer>false</organismsDiffer>
    <experiments>4</experiments>
</comment>
<comment type="subcellular location">
    <subcellularLocation>
        <location evidence="3 4">Nucleus</location>
        <location evidence="3 4">Nucleolus</location>
    </subcellularLocation>
</comment>
<comment type="similarity">
    <text evidence="6">Belongs to the WD repeat NOL10/ENP2 family.</text>
</comment>